<feature type="chain" id="PRO_1000018179" description="Tryptophan synthase alpha chain">
    <location>
        <begin position="1"/>
        <end position="271"/>
    </location>
</feature>
<feature type="active site" description="Proton acceptor" evidence="1">
    <location>
        <position position="49"/>
    </location>
</feature>
<feature type="active site" description="Proton acceptor" evidence="1">
    <location>
        <position position="60"/>
    </location>
</feature>
<gene>
    <name evidence="1" type="primary">trpA</name>
    <name type="ordered locus">BURPS668_A2443</name>
</gene>
<sequence>MSRIQNTFAALAAQGRKGLIPFITAGDPDPAKTVELMHALAEGGADVIELGVPFSDPMADGPVIQRSSERALAKGVTLHSVLDDVKRFRARDQKTPVVLMGYANPIERMGADAFAAAARDAGVDGVLVVDYPPEESHDFAAKMRAAGIDPIFLLAPTSTDDRIAAVGQVASGYVYYVSLKGVTGAANLDVSSIAGKIPAIKSRVPLPVGVGFGIRDAATARAVAEVADAVVIGSRLVQLLEQAVPERAAAELAGFVAELRAAIDGAAKPAA</sequence>
<reference key="1">
    <citation type="journal article" date="2010" name="Genome Biol. Evol.">
        <title>Continuing evolution of Burkholderia mallei through genome reduction and large-scale rearrangements.</title>
        <authorList>
            <person name="Losada L."/>
            <person name="Ronning C.M."/>
            <person name="DeShazer D."/>
            <person name="Woods D."/>
            <person name="Fedorova N."/>
            <person name="Kim H.S."/>
            <person name="Shabalina S.A."/>
            <person name="Pearson T.R."/>
            <person name="Brinkac L."/>
            <person name="Tan P."/>
            <person name="Nandi T."/>
            <person name="Crabtree J."/>
            <person name="Badger J."/>
            <person name="Beckstrom-Sternberg S."/>
            <person name="Saqib M."/>
            <person name="Schutzer S.E."/>
            <person name="Keim P."/>
            <person name="Nierman W.C."/>
        </authorList>
    </citation>
    <scope>NUCLEOTIDE SEQUENCE [LARGE SCALE GENOMIC DNA]</scope>
    <source>
        <strain>668</strain>
    </source>
</reference>
<comment type="function">
    <text evidence="1">The alpha subunit is responsible for the aldol cleavage of indoleglycerol phosphate to indole and glyceraldehyde 3-phosphate.</text>
</comment>
<comment type="catalytic activity">
    <reaction evidence="1">
        <text>(1S,2R)-1-C-(indol-3-yl)glycerol 3-phosphate + L-serine = D-glyceraldehyde 3-phosphate + L-tryptophan + H2O</text>
        <dbReference type="Rhea" id="RHEA:10532"/>
        <dbReference type="ChEBI" id="CHEBI:15377"/>
        <dbReference type="ChEBI" id="CHEBI:33384"/>
        <dbReference type="ChEBI" id="CHEBI:57912"/>
        <dbReference type="ChEBI" id="CHEBI:58866"/>
        <dbReference type="ChEBI" id="CHEBI:59776"/>
        <dbReference type="EC" id="4.2.1.20"/>
    </reaction>
</comment>
<comment type="pathway">
    <text evidence="1">Amino-acid biosynthesis; L-tryptophan biosynthesis; L-tryptophan from chorismate: step 5/5.</text>
</comment>
<comment type="subunit">
    <text evidence="1">Tetramer of two alpha and two beta chains.</text>
</comment>
<comment type="similarity">
    <text evidence="1">Belongs to the TrpA family.</text>
</comment>
<accession>A3NM66</accession>
<keyword id="KW-0028">Amino-acid biosynthesis</keyword>
<keyword id="KW-0057">Aromatic amino acid biosynthesis</keyword>
<keyword id="KW-0456">Lyase</keyword>
<keyword id="KW-0822">Tryptophan biosynthesis</keyword>
<organism>
    <name type="scientific">Burkholderia pseudomallei (strain 668)</name>
    <dbReference type="NCBI Taxonomy" id="320373"/>
    <lineage>
        <taxon>Bacteria</taxon>
        <taxon>Pseudomonadati</taxon>
        <taxon>Pseudomonadota</taxon>
        <taxon>Betaproteobacteria</taxon>
        <taxon>Burkholderiales</taxon>
        <taxon>Burkholderiaceae</taxon>
        <taxon>Burkholderia</taxon>
        <taxon>pseudomallei group</taxon>
    </lineage>
</organism>
<proteinExistence type="inferred from homology"/>
<evidence type="ECO:0000255" key="1">
    <source>
        <dbReference type="HAMAP-Rule" id="MF_00131"/>
    </source>
</evidence>
<protein>
    <recommendedName>
        <fullName evidence="1">Tryptophan synthase alpha chain</fullName>
        <ecNumber evidence="1">4.2.1.20</ecNumber>
    </recommendedName>
</protein>
<name>TRPA_BURP6</name>
<dbReference type="EC" id="4.2.1.20" evidence="1"/>
<dbReference type="EMBL" id="CP000571">
    <property type="protein sequence ID" value="ABN86126.1"/>
    <property type="molecule type" value="Genomic_DNA"/>
</dbReference>
<dbReference type="RefSeq" id="WP_004187543.1">
    <property type="nucleotide sequence ID" value="NC_009075.1"/>
</dbReference>
<dbReference type="SMR" id="A3NM66"/>
<dbReference type="GeneID" id="92977654"/>
<dbReference type="KEGG" id="bpd:BURPS668_A2443"/>
<dbReference type="HOGENOM" id="CLU_016734_0_0_4"/>
<dbReference type="UniPathway" id="UPA00035">
    <property type="reaction ID" value="UER00044"/>
</dbReference>
<dbReference type="GO" id="GO:0005829">
    <property type="term" value="C:cytosol"/>
    <property type="evidence" value="ECO:0007669"/>
    <property type="project" value="TreeGrafter"/>
</dbReference>
<dbReference type="GO" id="GO:0004834">
    <property type="term" value="F:tryptophan synthase activity"/>
    <property type="evidence" value="ECO:0007669"/>
    <property type="project" value="UniProtKB-UniRule"/>
</dbReference>
<dbReference type="CDD" id="cd04724">
    <property type="entry name" value="Tryptophan_synthase_alpha"/>
    <property type="match status" value="1"/>
</dbReference>
<dbReference type="FunFam" id="3.20.20.70:FF:000037">
    <property type="entry name" value="Tryptophan synthase alpha chain"/>
    <property type="match status" value="1"/>
</dbReference>
<dbReference type="Gene3D" id="3.20.20.70">
    <property type="entry name" value="Aldolase class I"/>
    <property type="match status" value="1"/>
</dbReference>
<dbReference type="HAMAP" id="MF_00131">
    <property type="entry name" value="Trp_synth_alpha"/>
    <property type="match status" value="1"/>
</dbReference>
<dbReference type="InterPro" id="IPR013785">
    <property type="entry name" value="Aldolase_TIM"/>
</dbReference>
<dbReference type="InterPro" id="IPR011060">
    <property type="entry name" value="RibuloseP-bd_barrel"/>
</dbReference>
<dbReference type="InterPro" id="IPR018204">
    <property type="entry name" value="Trp_synthase_alpha_AS"/>
</dbReference>
<dbReference type="InterPro" id="IPR002028">
    <property type="entry name" value="Trp_synthase_suA"/>
</dbReference>
<dbReference type="NCBIfam" id="TIGR00262">
    <property type="entry name" value="trpA"/>
    <property type="match status" value="1"/>
</dbReference>
<dbReference type="PANTHER" id="PTHR43406:SF1">
    <property type="entry name" value="TRYPTOPHAN SYNTHASE ALPHA CHAIN, CHLOROPLASTIC"/>
    <property type="match status" value="1"/>
</dbReference>
<dbReference type="PANTHER" id="PTHR43406">
    <property type="entry name" value="TRYPTOPHAN SYNTHASE, ALPHA CHAIN"/>
    <property type="match status" value="1"/>
</dbReference>
<dbReference type="Pfam" id="PF00290">
    <property type="entry name" value="Trp_syntA"/>
    <property type="match status" value="1"/>
</dbReference>
<dbReference type="SUPFAM" id="SSF51366">
    <property type="entry name" value="Ribulose-phoshate binding barrel"/>
    <property type="match status" value="1"/>
</dbReference>
<dbReference type="PROSITE" id="PS00167">
    <property type="entry name" value="TRP_SYNTHASE_ALPHA"/>
    <property type="match status" value="1"/>
</dbReference>